<organismHost>
    <name type="scientific">Acanthamoeba polyphaga</name>
    <name type="common">Amoeba</name>
    <dbReference type="NCBI Taxonomy" id="5757"/>
</organismHost>
<evidence type="ECO:0000255" key="1"/>
<evidence type="ECO:0000256" key="2">
    <source>
        <dbReference type="SAM" id="MobiDB-lite"/>
    </source>
</evidence>
<evidence type="ECO:0000305" key="3"/>
<keyword id="KW-0472">Membrane</keyword>
<keyword id="KW-1185">Reference proteome</keyword>
<keyword id="KW-0812">Transmembrane</keyword>
<keyword id="KW-1133">Transmembrane helix</keyword>
<protein>
    <recommendedName>
        <fullName>Uncharacterized protein R305</fullName>
    </recommendedName>
</protein>
<accession>Q5UPY8</accession>
<gene>
    <name type="ordered locus">MIMI_R305</name>
</gene>
<feature type="chain" id="PRO_0000247392" description="Uncharacterized protein R305">
    <location>
        <begin position="1"/>
        <end position="169"/>
    </location>
</feature>
<feature type="transmembrane region" description="Helical" evidence="1">
    <location>
        <begin position="10"/>
        <end position="30"/>
    </location>
</feature>
<feature type="region of interest" description="Disordered" evidence="2">
    <location>
        <begin position="98"/>
        <end position="123"/>
    </location>
</feature>
<feature type="compositionally biased region" description="Low complexity" evidence="2">
    <location>
        <begin position="100"/>
        <end position="115"/>
    </location>
</feature>
<reference key="1">
    <citation type="journal article" date="2004" name="Science">
        <title>The 1.2-megabase genome sequence of Mimivirus.</title>
        <authorList>
            <person name="Raoult D."/>
            <person name="Audic S."/>
            <person name="Robert C."/>
            <person name="Abergel C."/>
            <person name="Renesto P."/>
            <person name="Ogata H."/>
            <person name="La Scola B."/>
            <person name="Susan M."/>
            <person name="Claverie J.-M."/>
        </authorList>
    </citation>
    <scope>NUCLEOTIDE SEQUENCE [LARGE SCALE GENOMIC DNA]</scope>
    <source>
        <strain>Rowbotham-Bradford</strain>
    </source>
</reference>
<organism>
    <name type="scientific">Acanthamoeba polyphaga mimivirus</name>
    <name type="common">APMV</name>
    <dbReference type="NCBI Taxonomy" id="212035"/>
    <lineage>
        <taxon>Viruses</taxon>
        <taxon>Varidnaviria</taxon>
        <taxon>Bamfordvirae</taxon>
        <taxon>Nucleocytoviricota</taxon>
        <taxon>Megaviricetes</taxon>
        <taxon>Imitervirales</taxon>
        <taxon>Mimiviridae</taxon>
        <taxon>Megamimivirinae</taxon>
        <taxon>Mimivirus</taxon>
        <taxon>Mimivirus bradfordmassiliense</taxon>
    </lineage>
</organism>
<comment type="subcellular location">
    <subcellularLocation>
        <location evidence="3">Membrane</location>
        <topology evidence="3">Single-pass membrane protein</topology>
    </subcellularLocation>
</comment>
<proteinExistence type="predicted"/>
<name>YR305_MIMIV</name>
<dbReference type="EMBL" id="AY653733">
    <property type="protein sequence ID" value="AAV50577.1"/>
    <property type="molecule type" value="Genomic_DNA"/>
</dbReference>
<dbReference type="SMR" id="Q5UPY8"/>
<dbReference type="KEGG" id="vg:9924921"/>
<dbReference type="OrthoDB" id="28980at10239"/>
<dbReference type="Proteomes" id="UP000001134">
    <property type="component" value="Genome"/>
</dbReference>
<dbReference type="GO" id="GO:0016020">
    <property type="term" value="C:membrane"/>
    <property type="evidence" value="ECO:0007669"/>
    <property type="project" value="UniProtKB-SubCell"/>
</dbReference>
<sequence length="169" mass="20008">MNENFICNKYFVTILIIIIIILIVLLIVFLTKKNSRIERMENIDKLTFAEKPWSNTQDADTYKIVDNDFDKYVDELTKLLGNKNRAKRKDEVYRDYIQSKPINKNNQQTKNTPTPLDDRPDLSQCQPCICPNDRYIPNSESSENDNHLDREIRKKISELGSYVKNKYKR</sequence>